<gene>
    <name type="ORF">DDB_G0271698</name>
</gene>
<feature type="chain" id="PRO_0000348159" description="Putative uncharacterized protein DDB_G0271698">
    <location>
        <begin position="1"/>
        <end position="378"/>
    </location>
</feature>
<feature type="region of interest" description="Disordered" evidence="1">
    <location>
        <begin position="150"/>
        <end position="187"/>
    </location>
</feature>
<feature type="compositionally biased region" description="Low complexity" evidence="1">
    <location>
        <begin position="150"/>
        <end position="176"/>
    </location>
</feature>
<feature type="compositionally biased region" description="Basic and acidic residues" evidence="1">
    <location>
        <begin position="177"/>
        <end position="187"/>
    </location>
</feature>
<keyword id="KW-1185">Reference proteome</keyword>
<accession>Q75JB3</accession>
<accession>Q55AQ7</accession>
<reference key="1">
    <citation type="journal article" date="2002" name="Nature">
        <title>Sequence and analysis of chromosome 2 of Dictyostelium discoideum.</title>
        <authorList>
            <person name="Gloeckner G."/>
            <person name="Eichinger L."/>
            <person name="Szafranski K."/>
            <person name="Pachebat J.A."/>
            <person name="Bankier A.T."/>
            <person name="Dear P.H."/>
            <person name="Lehmann R."/>
            <person name="Baumgart C."/>
            <person name="Parra G."/>
            <person name="Abril J.F."/>
            <person name="Guigo R."/>
            <person name="Kumpf K."/>
            <person name="Tunggal B."/>
            <person name="Cox E.C."/>
            <person name="Quail M.A."/>
            <person name="Platzer M."/>
            <person name="Rosenthal A."/>
            <person name="Noegel A.A."/>
        </authorList>
    </citation>
    <scope>NUCLEOTIDE SEQUENCE [LARGE SCALE GENOMIC DNA]</scope>
    <source>
        <strain>AX4</strain>
    </source>
</reference>
<reference key="2">
    <citation type="journal article" date="2005" name="Nature">
        <title>The genome of the social amoeba Dictyostelium discoideum.</title>
        <authorList>
            <person name="Eichinger L."/>
            <person name="Pachebat J.A."/>
            <person name="Gloeckner G."/>
            <person name="Rajandream M.A."/>
            <person name="Sucgang R."/>
            <person name="Berriman M."/>
            <person name="Song J."/>
            <person name="Olsen R."/>
            <person name="Szafranski K."/>
            <person name="Xu Q."/>
            <person name="Tunggal B."/>
            <person name="Kummerfeld S."/>
            <person name="Madera M."/>
            <person name="Konfortov B.A."/>
            <person name="Rivero F."/>
            <person name="Bankier A.T."/>
            <person name="Lehmann R."/>
            <person name="Hamlin N."/>
            <person name="Davies R."/>
            <person name="Gaudet P."/>
            <person name="Fey P."/>
            <person name="Pilcher K."/>
            <person name="Chen G."/>
            <person name="Saunders D."/>
            <person name="Sodergren E.J."/>
            <person name="Davis P."/>
            <person name="Kerhornou A."/>
            <person name="Nie X."/>
            <person name="Hall N."/>
            <person name="Anjard C."/>
            <person name="Hemphill L."/>
            <person name="Bason N."/>
            <person name="Farbrother P."/>
            <person name="Desany B."/>
            <person name="Just E."/>
            <person name="Morio T."/>
            <person name="Rost R."/>
            <person name="Churcher C.M."/>
            <person name="Cooper J."/>
            <person name="Haydock S."/>
            <person name="van Driessche N."/>
            <person name="Cronin A."/>
            <person name="Goodhead I."/>
            <person name="Muzny D.M."/>
            <person name="Mourier T."/>
            <person name="Pain A."/>
            <person name="Lu M."/>
            <person name="Harper D."/>
            <person name="Lindsay R."/>
            <person name="Hauser H."/>
            <person name="James K.D."/>
            <person name="Quiles M."/>
            <person name="Madan Babu M."/>
            <person name="Saito T."/>
            <person name="Buchrieser C."/>
            <person name="Wardroper A."/>
            <person name="Felder M."/>
            <person name="Thangavelu M."/>
            <person name="Johnson D."/>
            <person name="Knights A."/>
            <person name="Loulseged H."/>
            <person name="Mungall K.L."/>
            <person name="Oliver K."/>
            <person name="Price C."/>
            <person name="Quail M.A."/>
            <person name="Urushihara H."/>
            <person name="Hernandez J."/>
            <person name="Rabbinowitsch E."/>
            <person name="Steffen D."/>
            <person name="Sanders M."/>
            <person name="Ma J."/>
            <person name="Kohara Y."/>
            <person name="Sharp S."/>
            <person name="Simmonds M.N."/>
            <person name="Spiegler S."/>
            <person name="Tivey A."/>
            <person name="Sugano S."/>
            <person name="White B."/>
            <person name="Walker D."/>
            <person name="Woodward J.R."/>
            <person name="Winckler T."/>
            <person name="Tanaka Y."/>
            <person name="Shaulsky G."/>
            <person name="Schleicher M."/>
            <person name="Weinstock G.M."/>
            <person name="Rosenthal A."/>
            <person name="Cox E.C."/>
            <person name="Chisholm R.L."/>
            <person name="Gibbs R.A."/>
            <person name="Loomis W.F."/>
            <person name="Platzer M."/>
            <person name="Kay R.R."/>
            <person name="Williams J.G."/>
            <person name="Dear P.H."/>
            <person name="Noegel A.A."/>
            <person name="Barrell B.G."/>
            <person name="Kuspa A."/>
        </authorList>
    </citation>
    <scope>NUCLEOTIDE SEQUENCE [LARGE SCALE GENOMIC DNA]</scope>
    <source>
        <strain>AX4</strain>
    </source>
</reference>
<organism>
    <name type="scientific">Dictyostelium discoideum</name>
    <name type="common">Social amoeba</name>
    <dbReference type="NCBI Taxonomy" id="44689"/>
    <lineage>
        <taxon>Eukaryota</taxon>
        <taxon>Amoebozoa</taxon>
        <taxon>Evosea</taxon>
        <taxon>Eumycetozoa</taxon>
        <taxon>Dictyostelia</taxon>
        <taxon>Dictyosteliales</taxon>
        <taxon>Dictyosteliaceae</taxon>
        <taxon>Dictyostelium</taxon>
    </lineage>
</organism>
<dbReference type="EMBL" id="AAFI02000006">
    <property type="protein sequence ID" value="EAL71539.1"/>
    <property type="molecule type" value="Genomic_DNA"/>
</dbReference>
<dbReference type="RefSeq" id="XP_645465.1">
    <property type="nucleotide sequence ID" value="XM_640373.1"/>
</dbReference>
<dbReference type="SMR" id="Q75JB3"/>
<dbReference type="PaxDb" id="44689-DDB0168452"/>
<dbReference type="EnsemblProtists" id="EAL71539">
    <property type="protein sequence ID" value="EAL71539"/>
    <property type="gene ID" value="DDB_G0271698"/>
</dbReference>
<dbReference type="GeneID" id="8618093"/>
<dbReference type="KEGG" id="ddi:DDB_G0271698"/>
<dbReference type="dictyBase" id="DDB_G0271698"/>
<dbReference type="VEuPathDB" id="AmoebaDB:DDB_G0271698"/>
<dbReference type="HOGENOM" id="CLU_732426_0_0_1"/>
<dbReference type="InParanoid" id="Q75JB3"/>
<dbReference type="PRO" id="PR:Q75JB3"/>
<dbReference type="Proteomes" id="UP000002195">
    <property type="component" value="Chromosome 2"/>
</dbReference>
<evidence type="ECO:0000256" key="1">
    <source>
        <dbReference type="SAM" id="MobiDB-lite"/>
    </source>
</evidence>
<name>Y8452_DICDI</name>
<sequence>MEYSHLYQKILSNLNNNNKLNCIFCKDEVFQVEWPGHLTLCCQLTIEYIKIINSPTQTINNINDDNKKLKIEKIENNYKQNLISNCTLCTEPIRLHNYIHHTNECISFIKNNFRQYLIDQIEYANIDNNSNTLNETINNNFIKNTTTTTTTTATTSNNRFNNNNSNNNNINNNNDNNNKEQKKESRCRELLVKKEKEPTSEVKKSNIDKNKNKKEQECIKIKELNDNRKMNFGHTKSQVNLQRVEICIFFNRCSDECGKPIRGKNKKLDLFSFVIGIGNEILKICRFSHFHSKDFYRLFYKDYYDKSIDIPNEIIDEKCIGIHCTGDTKNFNCTKHIYFSRNSISQIKFYFCSIYCLMDTIKSYDLEHLENFKKIMDD</sequence>
<protein>
    <recommendedName>
        <fullName>Putative uncharacterized protein DDB_G0271698</fullName>
    </recommendedName>
</protein>
<proteinExistence type="predicted"/>